<proteinExistence type="evidence at protein level"/>
<feature type="chain" id="PRO_0000419971" description="Ribosomal RNA large subunit methyltransferase K">
    <location>
        <begin position="1"/>
        <end position="354"/>
    </location>
</feature>
<gene>
    <name type="primary">rlmK</name>
    <name type="ordered locus">NMB1367</name>
</gene>
<evidence type="ECO:0000269" key="1">
    <source>
    </source>
</evidence>
<evidence type="ECO:0000305" key="2"/>
<keyword id="KW-0963">Cytoplasm</keyword>
<keyword id="KW-0489">Methyltransferase</keyword>
<keyword id="KW-1185">Reference proteome</keyword>
<keyword id="KW-0694">RNA-binding</keyword>
<keyword id="KW-0698">rRNA processing</keyword>
<keyword id="KW-0949">S-adenosyl-L-methionine</keyword>
<keyword id="KW-0808">Transferase</keyword>
<comment type="function">
    <text evidence="1">Specifically methylates the guanine in position 2069 (m7G2069) of 23S rRNA.</text>
</comment>
<comment type="catalytic activity">
    <reaction evidence="1">
        <text>guanosine(2069) in 23S rRNA + S-adenosyl-L-methionine = N(2)-methylguanosine(2069) in 23S rRNA + S-adenosyl-L-homocysteine + H(+)</text>
        <dbReference type="Rhea" id="RHEA:43772"/>
        <dbReference type="Rhea" id="RHEA-COMP:10688"/>
        <dbReference type="Rhea" id="RHEA-COMP:10689"/>
        <dbReference type="ChEBI" id="CHEBI:15378"/>
        <dbReference type="ChEBI" id="CHEBI:57856"/>
        <dbReference type="ChEBI" id="CHEBI:59789"/>
        <dbReference type="ChEBI" id="CHEBI:74269"/>
        <dbReference type="ChEBI" id="CHEBI:74481"/>
        <dbReference type="EC" id="2.1.1.264"/>
    </reaction>
</comment>
<comment type="subcellular location">
    <subcellularLocation>
        <location evidence="2">Cytoplasm</location>
    </subcellularLocation>
</comment>
<comment type="similarity">
    <text evidence="2">Belongs to the methyltransferase superfamily.</text>
</comment>
<organism>
    <name type="scientific">Neisseria meningitidis serogroup B (strain ATCC BAA-335 / MC58)</name>
    <dbReference type="NCBI Taxonomy" id="122586"/>
    <lineage>
        <taxon>Bacteria</taxon>
        <taxon>Pseudomonadati</taxon>
        <taxon>Pseudomonadota</taxon>
        <taxon>Betaproteobacteria</taxon>
        <taxon>Neisseriales</taxon>
        <taxon>Neisseriaceae</taxon>
        <taxon>Neisseria</taxon>
    </lineage>
</organism>
<dbReference type="EC" id="2.1.1.264"/>
<dbReference type="EMBL" id="AE002098">
    <property type="protein sequence ID" value="AAF41741.1"/>
    <property type="molecule type" value="Genomic_DNA"/>
</dbReference>
<dbReference type="PIR" id="D81090">
    <property type="entry name" value="D81090"/>
</dbReference>
<dbReference type="RefSeq" id="NP_274385.1">
    <property type="nucleotide sequence ID" value="NC_003112.2"/>
</dbReference>
<dbReference type="SMR" id="Q9JYY8"/>
<dbReference type="FunCoup" id="Q9JYY8">
    <property type="interactions" value="360"/>
</dbReference>
<dbReference type="STRING" id="122586.NMB1367"/>
<dbReference type="PaxDb" id="122586-NMB1367"/>
<dbReference type="KEGG" id="nme:NMB1367"/>
<dbReference type="PATRIC" id="fig|122586.8.peg.1711"/>
<dbReference type="HOGENOM" id="CLU_014042_1_1_4"/>
<dbReference type="InParanoid" id="Q9JYY8"/>
<dbReference type="OrthoDB" id="9805492at2"/>
<dbReference type="BRENDA" id="2.1.1.264">
    <property type="organism ID" value="3593"/>
</dbReference>
<dbReference type="Proteomes" id="UP000000425">
    <property type="component" value="Chromosome"/>
</dbReference>
<dbReference type="GO" id="GO:0005737">
    <property type="term" value="C:cytoplasm"/>
    <property type="evidence" value="ECO:0007669"/>
    <property type="project" value="UniProtKB-SubCell"/>
</dbReference>
<dbReference type="GO" id="GO:0008168">
    <property type="term" value="F:methyltransferase activity"/>
    <property type="evidence" value="ECO:0007669"/>
    <property type="project" value="UniProtKB-KW"/>
</dbReference>
<dbReference type="GO" id="GO:0003723">
    <property type="term" value="F:RNA binding"/>
    <property type="evidence" value="ECO:0007669"/>
    <property type="project" value="UniProtKB-KW"/>
</dbReference>
<dbReference type="GO" id="GO:0032259">
    <property type="term" value="P:methylation"/>
    <property type="evidence" value="ECO:0007669"/>
    <property type="project" value="UniProtKB-KW"/>
</dbReference>
<dbReference type="GO" id="GO:0006364">
    <property type="term" value="P:rRNA processing"/>
    <property type="evidence" value="ECO:0007669"/>
    <property type="project" value="UniProtKB-KW"/>
</dbReference>
<dbReference type="CDD" id="cd02440">
    <property type="entry name" value="AdoMet_MTases"/>
    <property type="match status" value="1"/>
</dbReference>
<dbReference type="Gene3D" id="3.30.750.80">
    <property type="entry name" value="RNA methyltransferase domain (HRMD) like"/>
    <property type="match status" value="1"/>
</dbReference>
<dbReference type="Gene3D" id="3.40.50.150">
    <property type="entry name" value="Vaccinia Virus protein VP39"/>
    <property type="match status" value="1"/>
</dbReference>
<dbReference type="InterPro" id="IPR019614">
    <property type="entry name" value="SAM-dep_methyl-trfase"/>
</dbReference>
<dbReference type="InterPro" id="IPR029063">
    <property type="entry name" value="SAM-dependent_MTases_sf"/>
</dbReference>
<dbReference type="PANTHER" id="PTHR43042:SF3">
    <property type="entry name" value="RIBOSOMAL RNA LARGE SUBUNIT METHYLTRANSFERASE YWBD-RELATED"/>
    <property type="match status" value="1"/>
</dbReference>
<dbReference type="PANTHER" id="PTHR43042">
    <property type="entry name" value="SAM-DEPENDENT METHYLTRANSFERASE"/>
    <property type="match status" value="1"/>
</dbReference>
<dbReference type="Pfam" id="PF10672">
    <property type="entry name" value="Methyltrans_SAM"/>
    <property type="match status" value="1"/>
</dbReference>
<dbReference type="SUPFAM" id="SSF53335">
    <property type="entry name" value="S-adenosyl-L-methionine-dependent methyltransferases"/>
    <property type="match status" value="1"/>
</dbReference>
<name>RLMK_NEIMB</name>
<protein>
    <recommendedName>
        <fullName>Ribosomal RNA large subunit methyltransferase K</fullName>
        <ecNumber>2.1.1.264</ecNumber>
    </recommendedName>
    <alternativeName>
        <fullName>23S rRNA m7G2069 methyltransferase</fullName>
    </alternativeName>
    <alternativeName>
        <fullName>rRNA (guanine-N(7)-)-methyltransferase RlmK</fullName>
    </alternativeName>
</protein>
<sequence>MASYDKISDGWYRVCPKRSSNRALITVKLPFSTLFRLKPMTDITPFANRLGKNIKHLMKWAKRNGIEAWRIYDRDIPQFPFAADVYGDRIHLQEYDTGWLMRPEEYEAWLAEVLEAVAFVTGFAPEQIRLKRRERQKGLQQYEKTGKAGDDFVITENGRKFWVNLDKYLDTGLFLDHRNTRKKVGETAAGKRFLNLFSYTGSFTVYAATGGAASSETVDLSNTYLDWAKRNFELNGIDTERHKIVRADVFQYLQTAYGEGRRFDLIVMDPPSFSNSKKMSDILDIQRDHKKLIDGAVKLLASDGILYFSNNLRSFVLDDLVSEQYAVKDISKQSVPEDFRNKKIHRCWEIRHKS</sequence>
<accession>Q9JYY8</accession>
<reference key="1">
    <citation type="journal article" date="2000" name="Science">
        <title>Complete genome sequence of Neisseria meningitidis serogroup B strain MC58.</title>
        <authorList>
            <person name="Tettelin H."/>
            <person name="Saunders N.J."/>
            <person name="Heidelberg J.F."/>
            <person name="Jeffries A.C."/>
            <person name="Nelson K.E."/>
            <person name="Eisen J.A."/>
            <person name="Ketchum K.A."/>
            <person name="Hood D.W."/>
            <person name="Peden J.F."/>
            <person name="Dodson R.J."/>
            <person name="Nelson W.C."/>
            <person name="Gwinn M.L."/>
            <person name="DeBoy R.T."/>
            <person name="Peterson J.D."/>
            <person name="Hickey E.K."/>
            <person name="Haft D.H."/>
            <person name="Salzberg S.L."/>
            <person name="White O."/>
            <person name="Fleischmann R.D."/>
            <person name="Dougherty B.A."/>
            <person name="Mason T.M."/>
            <person name="Ciecko A."/>
            <person name="Parksey D.S."/>
            <person name="Blair E."/>
            <person name="Cittone H."/>
            <person name="Clark E.B."/>
            <person name="Cotton M.D."/>
            <person name="Utterback T.R."/>
            <person name="Khouri H.M."/>
            <person name="Qin H."/>
            <person name="Vamathevan J.J."/>
            <person name="Gill J."/>
            <person name="Scarlato V."/>
            <person name="Masignani V."/>
            <person name="Pizza M."/>
            <person name="Grandi G."/>
            <person name="Sun L."/>
            <person name="Smith H.O."/>
            <person name="Fraser C.M."/>
            <person name="Moxon E.R."/>
            <person name="Rappuoli R."/>
            <person name="Venter J.C."/>
        </authorList>
    </citation>
    <scope>NUCLEOTIDE SEQUENCE [LARGE SCALE GENOMIC DNA]</scope>
    <source>
        <strain>ATCC BAA-335 / MC58</strain>
    </source>
</reference>
<reference key="2">
    <citation type="journal article" date="2012" name="Nucleic Acids Res.">
        <title>Base methylations in the double-stranded RNA by a fused methyltransferase bearing unwinding activity.</title>
        <authorList>
            <person name="Kimura S."/>
            <person name="Ikeuchi Y."/>
            <person name="Kitahara K."/>
            <person name="Sakaguchi Y."/>
            <person name="Suzuki T."/>
            <person name="Suzuki T."/>
        </authorList>
    </citation>
    <scope>FUNCTION</scope>
    <scope>CATALYTIC ACTIVITY</scope>
</reference>